<dbReference type="EMBL" id="AF272988">
    <property type="protein sequence ID" value="AAG00183.1"/>
    <property type="molecule type" value="Genomic_DNA"/>
</dbReference>
<dbReference type="SMR" id="Q9GBZ5"/>
<dbReference type="GO" id="GO:0005743">
    <property type="term" value="C:mitochondrial inner membrane"/>
    <property type="evidence" value="ECO:0007669"/>
    <property type="project" value="UniProtKB-SubCell"/>
</dbReference>
<dbReference type="GO" id="GO:0045275">
    <property type="term" value="C:respiratory chain complex III"/>
    <property type="evidence" value="ECO:0007669"/>
    <property type="project" value="InterPro"/>
</dbReference>
<dbReference type="GO" id="GO:0046872">
    <property type="term" value="F:metal ion binding"/>
    <property type="evidence" value="ECO:0007669"/>
    <property type="project" value="UniProtKB-KW"/>
</dbReference>
<dbReference type="GO" id="GO:0008121">
    <property type="term" value="F:ubiquinol-cytochrome-c reductase activity"/>
    <property type="evidence" value="ECO:0007669"/>
    <property type="project" value="InterPro"/>
</dbReference>
<dbReference type="GO" id="GO:0006122">
    <property type="term" value="P:mitochondrial electron transport, ubiquinol to cytochrome c"/>
    <property type="evidence" value="ECO:0007669"/>
    <property type="project" value="TreeGrafter"/>
</dbReference>
<dbReference type="CDD" id="cd00290">
    <property type="entry name" value="cytochrome_b_C"/>
    <property type="match status" value="1"/>
</dbReference>
<dbReference type="CDD" id="cd00284">
    <property type="entry name" value="Cytochrome_b_N"/>
    <property type="match status" value="1"/>
</dbReference>
<dbReference type="FunFam" id="1.20.810.10:FF:000002">
    <property type="entry name" value="Cytochrome b"/>
    <property type="match status" value="1"/>
</dbReference>
<dbReference type="Gene3D" id="1.20.810.10">
    <property type="entry name" value="Cytochrome Bc1 Complex, Chain C"/>
    <property type="match status" value="1"/>
</dbReference>
<dbReference type="InterPro" id="IPR005798">
    <property type="entry name" value="Cyt_b/b6_C"/>
</dbReference>
<dbReference type="InterPro" id="IPR036150">
    <property type="entry name" value="Cyt_b/b6_C_sf"/>
</dbReference>
<dbReference type="InterPro" id="IPR005797">
    <property type="entry name" value="Cyt_b/b6_N"/>
</dbReference>
<dbReference type="InterPro" id="IPR027387">
    <property type="entry name" value="Cytb/b6-like_sf"/>
</dbReference>
<dbReference type="InterPro" id="IPR030689">
    <property type="entry name" value="Cytochrome_b"/>
</dbReference>
<dbReference type="InterPro" id="IPR048260">
    <property type="entry name" value="Cytochrome_b_C_euk/bac"/>
</dbReference>
<dbReference type="InterPro" id="IPR048259">
    <property type="entry name" value="Cytochrome_b_N_euk/bac"/>
</dbReference>
<dbReference type="InterPro" id="IPR016174">
    <property type="entry name" value="Di-haem_cyt_TM"/>
</dbReference>
<dbReference type="PANTHER" id="PTHR19271">
    <property type="entry name" value="CYTOCHROME B"/>
    <property type="match status" value="1"/>
</dbReference>
<dbReference type="PANTHER" id="PTHR19271:SF16">
    <property type="entry name" value="CYTOCHROME B"/>
    <property type="match status" value="1"/>
</dbReference>
<dbReference type="Pfam" id="PF00032">
    <property type="entry name" value="Cytochrom_B_C"/>
    <property type="match status" value="1"/>
</dbReference>
<dbReference type="Pfam" id="PF00033">
    <property type="entry name" value="Cytochrome_B"/>
    <property type="match status" value="1"/>
</dbReference>
<dbReference type="PIRSF" id="PIRSF038885">
    <property type="entry name" value="COB"/>
    <property type="match status" value="1"/>
</dbReference>
<dbReference type="SUPFAM" id="SSF81648">
    <property type="entry name" value="a domain/subunit of cytochrome bc1 complex (Ubiquinol-cytochrome c reductase)"/>
    <property type="match status" value="1"/>
</dbReference>
<dbReference type="SUPFAM" id="SSF81342">
    <property type="entry name" value="Transmembrane di-heme cytochromes"/>
    <property type="match status" value="1"/>
</dbReference>
<dbReference type="PROSITE" id="PS51003">
    <property type="entry name" value="CYTB_CTER"/>
    <property type="match status" value="1"/>
</dbReference>
<dbReference type="PROSITE" id="PS51002">
    <property type="entry name" value="CYTB_NTER"/>
    <property type="match status" value="1"/>
</dbReference>
<gene>
    <name type="primary">MT-CYB</name>
    <name type="synonym">COB</name>
    <name type="synonym">CYTB</name>
    <name type="synonym">MTCYB</name>
</gene>
<accession>Q9GBZ5</accession>
<sequence>MTNIRKTHPLMKIINHSLIDLPAPSNISAWWNFGSLLGLCLGIQIITGLFLAMHYTSDTLTAFSSVTHICRDVNYGWIIRYMHANGASMFFICLFLHVGRGIYYGSYTYSETWNIGILLLFAVMATAFMGYVLPWGQMSFWGATVITNLLSAIPYIGTDLVQWIWGGFSVDKATLTRFFAFHFILPFIITALVMVHLLFLHETGSNNPTGIISDADKIPFHPYYTIKDALGFLLMISLLLTLVLFSPDLLGDPDNYTPANPLNTPPHIKPEWYFLFAYAILRSIPNKLGGVLALVLSIAILAAMPLLHTSKQRSMMFRPISQTLFWILVADLFTLTWIGGQPVEHPFIIIGQLASFLYFFLILVLMPASSLIENKLLKW</sequence>
<name>CYB_OCHRO</name>
<evidence type="ECO:0000250" key="1"/>
<evidence type="ECO:0000250" key="2">
    <source>
        <dbReference type="UniProtKB" id="P00157"/>
    </source>
</evidence>
<evidence type="ECO:0000255" key="3">
    <source>
        <dbReference type="PROSITE-ProRule" id="PRU00967"/>
    </source>
</evidence>
<evidence type="ECO:0000255" key="4">
    <source>
        <dbReference type="PROSITE-ProRule" id="PRU00968"/>
    </source>
</evidence>
<geneLocation type="mitochondrion"/>
<reference key="1">
    <citation type="journal article" date="2000" name="Mol. Phylogenet. Evol.">
        <title>Molecular systematics of pikas (genus Ochotona) inferred from mitochondrial DNA sequences.</title>
        <authorList>
            <person name="Yu N."/>
            <person name="Zheng C."/>
            <person name="Zhang Y.P."/>
            <person name="Li W.H."/>
        </authorList>
    </citation>
    <scope>NUCLEOTIDE SEQUENCE [GENOMIC DNA]</scope>
</reference>
<protein>
    <recommendedName>
        <fullName>Cytochrome b</fullName>
    </recommendedName>
    <alternativeName>
        <fullName>Complex III subunit 3</fullName>
    </alternativeName>
    <alternativeName>
        <fullName>Complex III subunit III</fullName>
    </alternativeName>
    <alternativeName>
        <fullName>Cytochrome b-c1 complex subunit 3</fullName>
    </alternativeName>
    <alternativeName>
        <fullName>Ubiquinol-cytochrome-c reductase complex cytochrome b subunit</fullName>
    </alternativeName>
</protein>
<comment type="function">
    <text evidence="2">Component of the ubiquinol-cytochrome c reductase complex (complex III or cytochrome b-c1 complex) that is part of the mitochondrial respiratory chain. The b-c1 complex mediates electron transfer from ubiquinol to cytochrome c. Contributes to the generation of a proton gradient across the mitochondrial membrane that is then used for ATP synthesis.</text>
</comment>
<comment type="cofactor">
    <cofactor evidence="2">
        <name>heme b</name>
        <dbReference type="ChEBI" id="CHEBI:60344"/>
    </cofactor>
    <text evidence="2">Binds 2 heme b groups non-covalently.</text>
</comment>
<comment type="subunit">
    <text evidence="2">The cytochrome bc1 complex contains 11 subunits: 3 respiratory subunits (MT-CYB, CYC1 and UQCRFS1), 2 core proteins (UQCRC1 and UQCRC2) and 6 low-molecular weight proteins (UQCRH/QCR6, UQCRB/QCR7, UQCRQ/QCR8, UQCR10/QCR9, UQCR11/QCR10 and a cleavage product of UQCRFS1). This cytochrome bc1 complex then forms a dimer.</text>
</comment>
<comment type="subcellular location">
    <subcellularLocation>
        <location evidence="2">Mitochondrion inner membrane</location>
        <topology evidence="2">Multi-pass membrane protein</topology>
    </subcellularLocation>
</comment>
<comment type="miscellaneous">
    <text evidence="1">Heme 1 (or BL or b562) is low-potential and absorbs at about 562 nm, and heme 2 (or BH or b566) is high-potential and absorbs at about 566 nm.</text>
</comment>
<comment type="similarity">
    <text evidence="3 4">Belongs to the cytochrome b family.</text>
</comment>
<comment type="caution">
    <text evidence="2">The full-length protein contains only eight transmembrane helices, not nine as predicted by bioinformatics tools.</text>
</comment>
<organism>
    <name type="scientific">Ochotona roylei</name>
    <name type="common">Royle's pika</name>
    <dbReference type="NCBI Taxonomy" id="130842"/>
    <lineage>
        <taxon>Eukaryota</taxon>
        <taxon>Metazoa</taxon>
        <taxon>Chordata</taxon>
        <taxon>Craniata</taxon>
        <taxon>Vertebrata</taxon>
        <taxon>Euteleostomi</taxon>
        <taxon>Mammalia</taxon>
        <taxon>Eutheria</taxon>
        <taxon>Euarchontoglires</taxon>
        <taxon>Glires</taxon>
        <taxon>Lagomorpha</taxon>
        <taxon>Ochotonidae</taxon>
        <taxon>Ochotona</taxon>
    </lineage>
</organism>
<feature type="chain" id="PRO_0000061307" description="Cytochrome b">
    <location>
        <begin position="1"/>
        <end position="379"/>
    </location>
</feature>
<feature type="transmembrane region" description="Helical" evidence="2">
    <location>
        <begin position="33"/>
        <end position="53"/>
    </location>
</feature>
<feature type="transmembrane region" description="Helical" evidence="2">
    <location>
        <begin position="77"/>
        <end position="98"/>
    </location>
</feature>
<feature type="transmembrane region" description="Helical" evidence="2">
    <location>
        <begin position="113"/>
        <end position="133"/>
    </location>
</feature>
<feature type="transmembrane region" description="Helical" evidence="2">
    <location>
        <begin position="178"/>
        <end position="198"/>
    </location>
</feature>
<feature type="transmembrane region" description="Helical" evidence="2">
    <location>
        <begin position="226"/>
        <end position="246"/>
    </location>
</feature>
<feature type="transmembrane region" description="Helical" evidence="2">
    <location>
        <begin position="288"/>
        <end position="308"/>
    </location>
</feature>
<feature type="transmembrane region" description="Helical" evidence="2">
    <location>
        <begin position="320"/>
        <end position="340"/>
    </location>
</feature>
<feature type="transmembrane region" description="Helical" evidence="2">
    <location>
        <begin position="347"/>
        <end position="367"/>
    </location>
</feature>
<feature type="binding site" description="axial binding residue" evidence="2">
    <location>
        <position position="83"/>
    </location>
    <ligand>
        <name>heme b</name>
        <dbReference type="ChEBI" id="CHEBI:60344"/>
        <label>b562</label>
    </ligand>
    <ligandPart>
        <name>Fe</name>
        <dbReference type="ChEBI" id="CHEBI:18248"/>
    </ligandPart>
</feature>
<feature type="binding site" description="axial binding residue" evidence="2">
    <location>
        <position position="97"/>
    </location>
    <ligand>
        <name>heme b</name>
        <dbReference type="ChEBI" id="CHEBI:60344"/>
        <label>b566</label>
    </ligand>
    <ligandPart>
        <name>Fe</name>
        <dbReference type="ChEBI" id="CHEBI:18248"/>
    </ligandPart>
</feature>
<feature type="binding site" description="axial binding residue" evidence="2">
    <location>
        <position position="182"/>
    </location>
    <ligand>
        <name>heme b</name>
        <dbReference type="ChEBI" id="CHEBI:60344"/>
        <label>b562</label>
    </ligand>
    <ligandPart>
        <name>Fe</name>
        <dbReference type="ChEBI" id="CHEBI:18248"/>
    </ligandPart>
</feature>
<feature type="binding site" description="axial binding residue" evidence="2">
    <location>
        <position position="196"/>
    </location>
    <ligand>
        <name>heme b</name>
        <dbReference type="ChEBI" id="CHEBI:60344"/>
        <label>b566</label>
    </ligand>
    <ligandPart>
        <name>Fe</name>
        <dbReference type="ChEBI" id="CHEBI:18248"/>
    </ligandPart>
</feature>
<feature type="binding site" evidence="2">
    <location>
        <position position="201"/>
    </location>
    <ligand>
        <name>a ubiquinone</name>
        <dbReference type="ChEBI" id="CHEBI:16389"/>
    </ligand>
</feature>
<keyword id="KW-0249">Electron transport</keyword>
<keyword id="KW-0349">Heme</keyword>
<keyword id="KW-0408">Iron</keyword>
<keyword id="KW-0472">Membrane</keyword>
<keyword id="KW-0479">Metal-binding</keyword>
<keyword id="KW-0496">Mitochondrion</keyword>
<keyword id="KW-0999">Mitochondrion inner membrane</keyword>
<keyword id="KW-0679">Respiratory chain</keyword>
<keyword id="KW-0812">Transmembrane</keyword>
<keyword id="KW-1133">Transmembrane helix</keyword>
<keyword id="KW-0813">Transport</keyword>
<keyword id="KW-0830">Ubiquinone</keyword>
<proteinExistence type="inferred from homology"/>